<dbReference type="EC" id="7.4.2.8" evidence="1"/>
<dbReference type="EMBL" id="CP001337">
    <property type="protein sequence ID" value="ACL26051.1"/>
    <property type="molecule type" value="Genomic_DNA"/>
</dbReference>
<dbReference type="RefSeq" id="WP_015941898.1">
    <property type="nucleotide sequence ID" value="NC_011831.1"/>
</dbReference>
<dbReference type="SMR" id="B8G7L6"/>
<dbReference type="STRING" id="326427.Cagg_3193"/>
<dbReference type="KEGG" id="cag:Cagg_3193"/>
<dbReference type="eggNOG" id="COG0653">
    <property type="taxonomic scope" value="Bacteria"/>
</dbReference>
<dbReference type="HOGENOM" id="CLU_005314_3_0_0"/>
<dbReference type="OrthoDB" id="9805579at2"/>
<dbReference type="Proteomes" id="UP000002508">
    <property type="component" value="Chromosome"/>
</dbReference>
<dbReference type="GO" id="GO:0031522">
    <property type="term" value="C:cell envelope Sec protein transport complex"/>
    <property type="evidence" value="ECO:0007669"/>
    <property type="project" value="TreeGrafter"/>
</dbReference>
<dbReference type="GO" id="GO:0005829">
    <property type="term" value="C:cytosol"/>
    <property type="evidence" value="ECO:0007669"/>
    <property type="project" value="TreeGrafter"/>
</dbReference>
<dbReference type="GO" id="GO:0005886">
    <property type="term" value="C:plasma membrane"/>
    <property type="evidence" value="ECO:0007669"/>
    <property type="project" value="UniProtKB-SubCell"/>
</dbReference>
<dbReference type="GO" id="GO:0005524">
    <property type="term" value="F:ATP binding"/>
    <property type="evidence" value="ECO:0007669"/>
    <property type="project" value="UniProtKB-UniRule"/>
</dbReference>
<dbReference type="GO" id="GO:0046872">
    <property type="term" value="F:metal ion binding"/>
    <property type="evidence" value="ECO:0007669"/>
    <property type="project" value="UniProtKB-KW"/>
</dbReference>
<dbReference type="GO" id="GO:0008564">
    <property type="term" value="F:protein-exporting ATPase activity"/>
    <property type="evidence" value="ECO:0007669"/>
    <property type="project" value="UniProtKB-EC"/>
</dbReference>
<dbReference type="GO" id="GO:0065002">
    <property type="term" value="P:intracellular protein transmembrane transport"/>
    <property type="evidence" value="ECO:0007669"/>
    <property type="project" value="UniProtKB-UniRule"/>
</dbReference>
<dbReference type="GO" id="GO:0017038">
    <property type="term" value="P:protein import"/>
    <property type="evidence" value="ECO:0007669"/>
    <property type="project" value="InterPro"/>
</dbReference>
<dbReference type="GO" id="GO:0006605">
    <property type="term" value="P:protein targeting"/>
    <property type="evidence" value="ECO:0007669"/>
    <property type="project" value="UniProtKB-UniRule"/>
</dbReference>
<dbReference type="GO" id="GO:0043952">
    <property type="term" value="P:protein transport by the Sec complex"/>
    <property type="evidence" value="ECO:0007669"/>
    <property type="project" value="TreeGrafter"/>
</dbReference>
<dbReference type="CDD" id="cd17928">
    <property type="entry name" value="DEXDc_SecA"/>
    <property type="match status" value="1"/>
</dbReference>
<dbReference type="CDD" id="cd18803">
    <property type="entry name" value="SF2_C_secA"/>
    <property type="match status" value="1"/>
</dbReference>
<dbReference type="FunFam" id="3.40.50.300:FF:000113">
    <property type="entry name" value="Preprotein translocase subunit SecA"/>
    <property type="match status" value="1"/>
</dbReference>
<dbReference type="FunFam" id="1.10.3060.10:FF:000003">
    <property type="entry name" value="Protein translocase subunit SecA"/>
    <property type="match status" value="1"/>
</dbReference>
<dbReference type="FunFam" id="3.90.1440.10:FF:000002">
    <property type="entry name" value="Protein translocase subunit SecA"/>
    <property type="match status" value="1"/>
</dbReference>
<dbReference type="Gene3D" id="1.10.3060.10">
    <property type="entry name" value="Helical scaffold and wing domains of SecA"/>
    <property type="match status" value="1"/>
</dbReference>
<dbReference type="Gene3D" id="3.40.50.300">
    <property type="entry name" value="P-loop containing nucleotide triphosphate hydrolases"/>
    <property type="match status" value="2"/>
</dbReference>
<dbReference type="Gene3D" id="3.90.1440.10">
    <property type="entry name" value="SecA, preprotein cross-linking domain"/>
    <property type="match status" value="1"/>
</dbReference>
<dbReference type="HAMAP" id="MF_01382">
    <property type="entry name" value="SecA"/>
    <property type="match status" value="1"/>
</dbReference>
<dbReference type="InterPro" id="IPR014001">
    <property type="entry name" value="Helicase_ATP-bd"/>
</dbReference>
<dbReference type="InterPro" id="IPR001650">
    <property type="entry name" value="Helicase_C-like"/>
</dbReference>
<dbReference type="InterPro" id="IPR027417">
    <property type="entry name" value="P-loop_NTPase"/>
</dbReference>
<dbReference type="InterPro" id="IPR004027">
    <property type="entry name" value="SEC_C_motif"/>
</dbReference>
<dbReference type="InterPro" id="IPR000185">
    <property type="entry name" value="SecA"/>
</dbReference>
<dbReference type="InterPro" id="IPR020937">
    <property type="entry name" value="SecA_CS"/>
</dbReference>
<dbReference type="InterPro" id="IPR011115">
    <property type="entry name" value="SecA_DEAD"/>
</dbReference>
<dbReference type="InterPro" id="IPR014018">
    <property type="entry name" value="SecA_motor_DEAD"/>
</dbReference>
<dbReference type="InterPro" id="IPR011130">
    <property type="entry name" value="SecA_preprotein_X-link_dom"/>
</dbReference>
<dbReference type="InterPro" id="IPR044722">
    <property type="entry name" value="SecA_SF2_C"/>
</dbReference>
<dbReference type="InterPro" id="IPR011116">
    <property type="entry name" value="SecA_Wing/Scaffold"/>
</dbReference>
<dbReference type="InterPro" id="IPR036266">
    <property type="entry name" value="SecA_Wing/Scaffold_sf"/>
</dbReference>
<dbReference type="InterPro" id="IPR036670">
    <property type="entry name" value="SecA_X-link_sf"/>
</dbReference>
<dbReference type="NCBIfam" id="NF009538">
    <property type="entry name" value="PRK12904.1"/>
    <property type="match status" value="1"/>
</dbReference>
<dbReference type="NCBIfam" id="TIGR00963">
    <property type="entry name" value="secA"/>
    <property type="match status" value="1"/>
</dbReference>
<dbReference type="PANTHER" id="PTHR30612:SF0">
    <property type="entry name" value="CHLOROPLAST PROTEIN-TRANSPORTING ATPASE"/>
    <property type="match status" value="1"/>
</dbReference>
<dbReference type="PANTHER" id="PTHR30612">
    <property type="entry name" value="SECA INNER MEMBRANE COMPONENT OF SEC PROTEIN SECRETION SYSTEM"/>
    <property type="match status" value="1"/>
</dbReference>
<dbReference type="Pfam" id="PF21090">
    <property type="entry name" value="P-loop_SecA"/>
    <property type="match status" value="1"/>
</dbReference>
<dbReference type="Pfam" id="PF02810">
    <property type="entry name" value="SEC-C"/>
    <property type="match status" value="1"/>
</dbReference>
<dbReference type="Pfam" id="PF07517">
    <property type="entry name" value="SecA_DEAD"/>
    <property type="match status" value="1"/>
</dbReference>
<dbReference type="Pfam" id="PF01043">
    <property type="entry name" value="SecA_PP_bind"/>
    <property type="match status" value="1"/>
</dbReference>
<dbReference type="Pfam" id="PF07516">
    <property type="entry name" value="SecA_SW"/>
    <property type="match status" value="1"/>
</dbReference>
<dbReference type="PRINTS" id="PR00906">
    <property type="entry name" value="SECA"/>
</dbReference>
<dbReference type="SMART" id="SM00957">
    <property type="entry name" value="SecA_DEAD"/>
    <property type="match status" value="1"/>
</dbReference>
<dbReference type="SMART" id="SM00958">
    <property type="entry name" value="SecA_PP_bind"/>
    <property type="match status" value="1"/>
</dbReference>
<dbReference type="SUPFAM" id="SSF81886">
    <property type="entry name" value="Helical scaffold and wing domains of SecA"/>
    <property type="match status" value="1"/>
</dbReference>
<dbReference type="SUPFAM" id="SSF52540">
    <property type="entry name" value="P-loop containing nucleoside triphosphate hydrolases"/>
    <property type="match status" value="2"/>
</dbReference>
<dbReference type="SUPFAM" id="SSF81767">
    <property type="entry name" value="Pre-protein crosslinking domain of SecA"/>
    <property type="match status" value="1"/>
</dbReference>
<dbReference type="PROSITE" id="PS01312">
    <property type="entry name" value="SECA"/>
    <property type="match status" value="1"/>
</dbReference>
<dbReference type="PROSITE" id="PS51196">
    <property type="entry name" value="SECA_MOTOR_DEAD"/>
    <property type="match status" value="1"/>
</dbReference>
<sequence length="992" mass="112464">MLNFFRRLLGDSNEKEIRRLQPIVEEINRLGPEFARLSDAELRAKTDEFRQRLADGETLDDILPEAFATVREAAARTIGLRHYDVQLIGGIVLHQGKIAEMKTGEGKTLVATLPLYLNALEGKGVHLVTVNDYLAKVGAGWMGPIYHFLGLSVGFIAHDQSALYDPDYIDPNANPEDQRLVHWRPCTRREAYLADITYGTNNEFGFDYLRDNMAYDKSQLVQRELHYAIVDEVDNILIDEARTPLIISGPAQKSSDLYRQMAKLVRQLRRSSVTAKQVKEEGLEPDGDFFVDERTKSIYLSEKGIEKLEKLLNIPPGESLFDPEHYEKTHYVENALKAQFIYQRDRDYMVTPNGEVVIIDEFTGRAMPGRRWSDGLHQAIEAKEGVPIKNENVTLATITFQNYFRMYKKLAGMTGTAYTEREEFAKIYNLDVVVIPTHKPMIRKDLPDQIYATEEAKFRAVLREVQEMHEIGRPVLIGTTSVETSERLSAMLKQAGIPHNVLNAKHHEREAAIVAQAGRKGAVTVATNMAGRGTDILLGGNPDGLVEEFLRKEGLTLETATPEQKRAAWEKAKALTEAEGEEVRQLGGLHVIGTERHEARRIDNQLRGRAGRQGDPGSSRFFLSLEDELLRRFGPVERIKGLMERFVDSDVPLQAGLLDRTIESAQTRVEGYNFDIRKHTVEFDDVMNKQRQIIYADRKAILDEADMRERVLDLMAEEIQRQIDEHLSDGVDEFGLTELLRVYRRIDPTLPATVTAETLKGKTKEEIEQFLLDHLETTYAEREKAIGPEVMRTVERRVMLGAIDRQWVDYLTAMDELRQNILLQAYAQKDPLVEFKRESFRMFDELKANIAHDIVYNIIPASFQYEAYLRQIAEEQARRLATAQIAGGSSEVEQTRKPQRRTVQQIGRNDPCPCGSGKKFKHCHLGREHELAAFMNNAPATTPKVEPQPVKPAIAEEAAKIKAAIDNGTLPAASPKTPRGRQPQAVPRGKKR</sequence>
<proteinExistence type="inferred from homology"/>
<name>SECA_CHLAD</name>
<accession>B8G7L6</accession>
<feature type="chain" id="PRO_1000215102" description="Protein translocase subunit SecA">
    <location>
        <begin position="1"/>
        <end position="992"/>
    </location>
</feature>
<feature type="region of interest" description="Disordered" evidence="2">
    <location>
        <begin position="885"/>
        <end position="910"/>
    </location>
</feature>
<feature type="region of interest" description="Disordered" evidence="2">
    <location>
        <begin position="965"/>
        <end position="992"/>
    </location>
</feature>
<feature type="binding site" evidence="1">
    <location>
        <position position="86"/>
    </location>
    <ligand>
        <name>ATP</name>
        <dbReference type="ChEBI" id="CHEBI:30616"/>
    </ligand>
</feature>
<feature type="binding site" evidence="1">
    <location>
        <begin position="104"/>
        <end position="108"/>
    </location>
    <ligand>
        <name>ATP</name>
        <dbReference type="ChEBI" id="CHEBI:30616"/>
    </ligand>
</feature>
<feature type="binding site" evidence="1">
    <location>
        <position position="535"/>
    </location>
    <ligand>
        <name>ATP</name>
        <dbReference type="ChEBI" id="CHEBI:30616"/>
    </ligand>
</feature>
<feature type="binding site" evidence="1">
    <location>
        <position position="912"/>
    </location>
    <ligand>
        <name>Zn(2+)</name>
        <dbReference type="ChEBI" id="CHEBI:29105"/>
    </ligand>
</feature>
<feature type="binding site" evidence="1">
    <location>
        <position position="914"/>
    </location>
    <ligand>
        <name>Zn(2+)</name>
        <dbReference type="ChEBI" id="CHEBI:29105"/>
    </ligand>
</feature>
<feature type="binding site" evidence="1">
    <location>
        <position position="923"/>
    </location>
    <ligand>
        <name>Zn(2+)</name>
        <dbReference type="ChEBI" id="CHEBI:29105"/>
    </ligand>
</feature>
<feature type="binding site" evidence="1">
    <location>
        <position position="924"/>
    </location>
    <ligand>
        <name>Zn(2+)</name>
        <dbReference type="ChEBI" id="CHEBI:29105"/>
    </ligand>
</feature>
<organism>
    <name type="scientific">Chloroflexus aggregans (strain MD-66 / DSM 9485)</name>
    <dbReference type="NCBI Taxonomy" id="326427"/>
    <lineage>
        <taxon>Bacteria</taxon>
        <taxon>Bacillati</taxon>
        <taxon>Chloroflexota</taxon>
        <taxon>Chloroflexia</taxon>
        <taxon>Chloroflexales</taxon>
        <taxon>Chloroflexineae</taxon>
        <taxon>Chloroflexaceae</taxon>
        <taxon>Chloroflexus</taxon>
    </lineage>
</organism>
<gene>
    <name evidence="1" type="primary">secA</name>
    <name type="ordered locus">Cagg_3193</name>
</gene>
<reference key="1">
    <citation type="submission" date="2008-12" db="EMBL/GenBank/DDBJ databases">
        <title>Complete sequence of Chloroflexus aggregans DSM 9485.</title>
        <authorList>
            <consortium name="US DOE Joint Genome Institute"/>
            <person name="Lucas S."/>
            <person name="Copeland A."/>
            <person name="Lapidus A."/>
            <person name="Glavina del Rio T."/>
            <person name="Dalin E."/>
            <person name="Tice H."/>
            <person name="Pitluck S."/>
            <person name="Foster B."/>
            <person name="Larimer F."/>
            <person name="Land M."/>
            <person name="Hauser L."/>
            <person name="Kyrpides N."/>
            <person name="Mikhailova N."/>
            <person name="Bryant D.A."/>
            <person name="Richardson P."/>
        </authorList>
    </citation>
    <scope>NUCLEOTIDE SEQUENCE [LARGE SCALE GENOMIC DNA]</scope>
    <source>
        <strain>MD-66 / DSM 9485</strain>
    </source>
</reference>
<protein>
    <recommendedName>
        <fullName evidence="1">Protein translocase subunit SecA</fullName>
        <ecNumber evidence="1">7.4.2.8</ecNumber>
    </recommendedName>
</protein>
<keyword id="KW-0067">ATP-binding</keyword>
<keyword id="KW-1003">Cell membrane</keyword>
<keyword id="KW-0963">Cytoplasm</keyword>
<keyword id="KW-0472">Membrane</keyword>
<keyword id="KW-0479">Metal-binding</keyword>
<keyword id="KW-0547">Nucleotide-binding</keyword>
<keyword id="KW-0653">Protein transport</keyword>
<keyword id="KW-1278">Translocase</keyword>
<keyword id="KW-0811">Translocation</keyword>
<keyword id="KW-0813">Transport</keyword>
<keyword id="KW-0862">Zinc</keyword>
<evidence type="ECO:0000255" key="1">
    <source>
        <dbReference type="HAMAP-Rule" id="MF_01382"/>
    </source>
</evidence>
<evidence type="ECO:0000256" key="2">
    <source>
        <dbReference type="SAM" id="MobiDB-lite"/>
    </source>
</evidence>
<comment type="function">
    <text evidence="1">Part of the Sec protein translocase complex. Interacts with the SecYEG preprotein conducting channel. Has a central role in coupling the hydrolysis of ATP to the transfer of proteins into and across the cell membrane, serving as an ATP-driven molecular motor driving the stepwise translocation of polypeptide chains across the membrane.</text>
</comment>
<comment type="catalytic activity">
    <reaction evidence="1">
        <text>ATP + H2O + cellular proteinSide 1 = ADP + phosphate + cellular proteinSide 2.</text>
        <dbReference type="EC" id="7.4.2.8"/>
    </reaction>
</comment>
<comment type="cofactor">
    <cofactor evidence="1">
        <name>Zn(2+)</name>
        <dbReference type="ChEBI" id="CHEBI:29105"/>
    </cofactor>
    <text evidence="1">May bind 1 zinc ion per subunit.</text>
</comment>
<comment type="subunit">
    <text evidence="1">Monomer and homodimer. Part of the essential Sec protein translocation apparatus which comprises SecA, SecYEG and auxiliary proteins SecDF. Other proteins may also be involved.</text>
</comment>
<comment type="subcellular location">
    <subcellularLocation>
        <location evidence="1">Cell membrane</location>
        <topology evidence="1">Peripheral membrane protein</topology>
        <orientation evidence="1">Cytoplasmic side</orientation>
    </subcellularLocation>
    <subcellularLocation>
        <location evidence="1">Cytoplasm</location>
    </subcellularLocation>
    <text evidence="1">Distribution is 50-50.</text>
</comment>
<comment type="similarity">
    <text evidence="1">Belongs to the SecA family.</text>
</comment>